<gene>
    <name evidence="1" type="primary">rplY</name>
    <name evidence="1" type="synonym">ctc</name>
    <name type="ordered locus">ELI_05840</name>
</gene>
<name>RL25_ERYLH</name>
<dbReference type="EMBL" id="CP000157">
    <property type="protein sequence ID" value="ABC63260.1"/>
    <property type="molecule type" value="Genomic_DNA"/>
</dbReference>
<dbReference type="RefSeq" id="WP_011414096.1">
    <property type="nucleotide sequence ID" value="NC_007722.1"/>
</dbReference>
<dbReference type="SMR" id="Q2NAN1"/>
<dbReference type="STRING" id="314225.ELI_05840"/>
<dbReference type="KEGG" id="eli:ELI_05840"/>
<dbReference type="eggNOG" id="COG1825">
    <property type="taxonomic scope" value="Bacteria"/>
</dbReference>
<dbReference type="HOGENOM" id="CLU_075939_0_0_5"/>
<dbReference type="OrthoDB" id="9806411at2"/>
<dbReference type="Proteomes" id="UP000008808">
    <property type="component" value="Chromosome"/>
</dbReference>
<dbReference type="GO" id="GO:0022625">
    <property type="term" value="C:cytosolic large ribosomal subunit"/>
    <property type="evidence" value="ECO:0007669"/>
    <property type="project" value="TreeGrafter"/>
</dbReference>
<dbReference type="GO" id="GO:0008097">
    <property type="term" value="F:5S rRNA binding"/>
    <property type="evidence" value="ECO:0007669"/>
    <property type="project" value="InterPro"/>
</dbReference>
<dbReference type="GO" id="GO:0003735">
    <property type="term" value="F:structural constituent of ribosome"/>
    <property type="evidence" value="ECO:0007669"/>
    <property type="project" value="InterPro"/>
</dbReference>
<dbReference type="GO" id="GO:0006412">
    <property type="term" value="P:translation"/>
    <property type="evidence" value="ECO:0007669"/>
    <property type="project" value="UniProtKB-UniRule"/>
</dbReference>
<dbReference type="CDD" id="cd00495">
    <property type="entry name" value="Ribosomal_L25_TL5_CTC"/>
    <property type="match status" value="1"/>
</dbReference>
<dbReference type="Gene3D" id="2.170.120.20">
    <property type="entry name" value="Ribosomal protein L25, beta domain"/>
    <property type="match status" value="1"/>
</dbReference>
<dbReference type="Gene3D" id="2.40.240.10">
    <property type="entry name" value="Ribosomal Protein L25, Chain P"/>
    <property type="match status" value="1"/>
</dbReference>
<dbReference type="HAMAP" id="MF_01334">
    <property type="entry name" value="Ribosomal_bL25_CTC"/>
    <property type="match status" value="1"/>
</dbReference>
<dbReference type="InterPro" id="IPR020056">
    <property type="entry name" value="Rbsml_bL25/Gln-tRNA_synth_N"/>
</dbReference>
<dbReference type="InterPro" id="IPR011035">
    <property type="entry name" value="Ribosomal_bL25/Gln-tRNA_synth"/>
</dbReference>
<dbReference type="InterPro" id="IPR020057">
    <property type="entry name" value="Ribosomal_bL25_b-dom"/>
</dbReference>
<dbReference type="InterPro" id="IPR037121">
    <property type="entry name" value="Ribosomal_bL25_C"/>
</dbReference>
<dbReference type="InterPro" id="IPR001021">
    <property type="entry name" value="Ribosomal_bL25_long"/>
</dbReference>
<dbReference type="InterPro" id="IPR029751">
    <property type="entry name" value="Ribosomal_L25_dom"/>
</dbReference>
<dbReference type="InterPro" id="IPR020930">
    <property type="entry name" value="Ribosomal_uL5_bac-type"/>
</dbReference>
<dbReference type="NCBIfam" id="TIGR00731">
    <property type="entry name" value="bL25_bact_ctc"/>
    <property type="match status" value="1"/>
</dbReference>
<dbReference type="NCBIfam" id="NF004128">
    <property type="entry name" value="PRK05618.1-2"/>
    <property type="match status" value="1"/>
</dbReference>
<dbReference type="NCBIfam" id="NF004612">
    <property type="entry name" value="PRK05943.1"/>
    <property type="match status" value="1"/>
</dbReference>
<dbReference type="PANTHER" id="PTHR33284">
    <property type="entry name" value="RIBOSOMAL PROTEIN L25/GLN-TRNA SYNTHETASE, ANTI-CODON-BINDING DOMAIN-CONTAINING PROTEIN"/>
    <property type="match status" value="1"/>
</dbReference>
<dbReference type="PANTHER" id="PTHR33284:SF1">
    <property type="entry name" value="RIBOSOMAL PROTEIN L25_GLN-TRNA SYNTHETASE, ANTI-CODON-BINDING DOMAIN-CONTAINING PROTEIN"/>
    <property type="match status" value="1"/>
</dbReference>
<dbReference type="Pfam" id="PF01386">
    <property type="entry name" value="Ribosomal_L25p"/>
    <property type="match status" value="1"/>
</dbReference>
<dbReference type="Pfam" id="PF14693">
    <property type="entry name" value="Ribosomal_TL5_C"/>
    <property type="match status" value="1"/>
</dbReference>
<dbReference type="SUPFAM" id="SSF50715">
    <property type="entry name" value="Ribosomal protein L25-like"/>
    <property type="match status" value="1"/>
</dbReference>
<evidence type="ECO:0000255" key="1">
    <source>
        <dbReference type="HAMAP-Rule" id="MF_01334"/>
    </source>
</evidence>
<evidence type="ECO:0000256" key="2">
    <source>
        <dbReference type="SAM" id="MobiDB-lite"/>
    </source>
</evidence>
<evidence type="ECO:0000305" key="3"/>
<sequence>MSDALTLPAEARERAGKGASRALRREGRVPAVIYGGKEEPTMIHVEEKLLIKQLMTGHFMNSIVEIEIGGKTVRTLPKDVALHPVSDRPEHADFFRLAKGGKIEVSVPVVFMNEEASPGLKKGGVLNVVRHELELVCENDKIPGEIEIDVTGKEVGDSIHISEITLPEGSESAITDRDFTIATLVAPSALKKAEGSEEEEDGEEVDADAVPATEQEGEDGDGEESKGDD</sequence>
<reference key="1">
    <citation type="journal article" date="2009" name="J. Bacteriol.">
        <title>Complete genome sequence of Erythrobacter litoralis HTCC2594.</title>
        <authorList>
            <person name="Oh H.M."/>
            <person name="Giovannoni S.J."/>
            <person name="Ferriera S."/>
            <person name="Johnson J."/>
            <person name="Cho J.C."/>
        </authorList>
    </citation>
    <scope>NUCLEOTIDE SEQUENCE [LARGE SCALE GENOMIC DNA]</scope>
    <source>
        <strain>HTCC2594</strain>
    </source>
</reference>
<proteinExistence type="inferred from homology"/>
<accession>Q2NAN1</accession>
<keyword id="KW-1185">Reference proteome</keyword>
<keyword id="KW-0687">Ribonucleoprotein</keyword>
<keyword id="KW-0689">Ribosomal protein</keyword>
<keyword id="KW-0694">RNA-binding</keyword>
<keyword id="KW-0699">rRNA-binding</keyword>
<protein>
    <recommendedName>
        <fullName evidence="1">Large ribosomal subunit protein bL25</fullName>
    </recommendedName>
    <alternativeName>
        <fullName evidence="3">50S ribosomal protein L25</fullName>
    </alternativeName>
    <alternativeName>
        <fullName evidence="1">General stress protein CTC</fullName>
    </alternativeName>
</protein>
<feature type="chain" id="PRO_1000052888" description="Large ribosomal subunit protein bL25">
    <location>
        <begin position="1"/>
        <end position="229"/>
    </location>
</feature>
<feature type="region of interest" description="Disordered" evidence="2">
    <location>
        <begin position="1"/>
        <end position="21"/>
    </location>
</feature>
<feature type="region of interest" description="Disordered" evidence="2">
    <location>
        <begin position="187"/>
        <end position="229"/>
    </location>
</feature>
<feature type="compositionally biased region" description="Acidic residues" evidence="2">
    <location>
        <begin position="196"/>
        <end position="207"/>
    </location>
</feature>
<comment type="function">
    <text evidence="1">This is one of the proteins that binds to the 5S RNA in the ribosome where it forms part of the central protuberance.</text>
</comment>
<comment type="subunit">
    <text evidence="1">Part of the 50S ribosomal subunit; part of the 5S rRNA/L5/L18/L25 subcomplex. Contacts the 5S rRNA. Binds to the 5S rRNA independently of L5 and L18.</text>
</comment>
<comment type="similarity">
    <text evidence="1">Belongs to the bacterial ribosomal protein bL25 family. CTC subfamily.</text>
</comment>
<organism>
    <name type="scientific">Erythrobacter litoralis (strain HTCC2594)</name>
    <dbReference type="NCBI Taxonomy" id="314225"/>
    <lineage>
        <taxon>Bacteria</taxon>
        <taxon>Pseudomonadati</taxon>
        <taxon>Pseudomonadota</taxon>
        <taxon>Alphaproteobacteria</taxon>
        <taxon>Sphingomonadales</taxon>
        <taxon>Erythrobacteraceae</taxon>
        <taxon>Erythrobacter/Porphyrobacter group</taxon>
        <taxon>Erythrobacter</taxon>
    </lineage>
</organism>